<evidence type="ECO:0000255" key="1">
    <source>
        <dbReference type="HAMAP-Rule" id="MF_01343"/>
    </source>
</evidence>
<evidence type="ECO:0000305" key="2"/>
<sequence>MSTTVVKPEIIAQYKTHDKDTGSSEVQVALLTARINHLTEHLRTHRKDFHSRRGLLQMASRRRKLLDYLKKHDLPKYTELLQKLNLRK</sequence>
<keyword id="KW-1185">Reference proteome</keyword>
<keyword id="KW-0687">Ribonucleoprotein</keyword>
<keyword id="KW-0689">Ribosomal protein</keyword>
<keyword id="KW-0694">RNA-binding</keyword>
<keyword id="KW-0699">rRNA-binding</keyword>
<comment type="function">
    <text evidence="1">One of the primary rRNA binding proteins, it binds directly to 16S rRNA where it helps nucleate assembly of the platform of the 30S subunit by binding and bridging several RNA helices of the 16S rRNA.</text>
</comment>
<comment type="function">
    <text evidence="1">Forms an intersubunit bridge (bridge B4) with the 23S rRNA of the 50S subunit in the ribosome.</text>
</comment>
<comment type="subunit">
    <text evidence="1">Part of the 30S ribosomal subunit. Forms a bridge to the 50S subunit in the 70S ribosome, contacting the 23S rRNA.</text>
</comment>
<comment type="similarity">
    <text evidence="1">Belongs to the universal ribosomal protein uS15 family.</text>
</comment>
<accession>B1ZS99</accession>
<dbReference type="EMBL" id="CP001032">
    <property type="protein sequence ID" value="ACB75698.1"/>
    <property type="molecule type" value="Genomic_DNA"/>
</dbReference>
<dbReference type="RefSeq" id="WP_012375234.1">
    <property type="nucleotide sequence ID" value="NC_010571.1"/>
</dbReference>
<dbReference type="SMR" id="B1ZS99"/>
<dbReference type="STRING" id="452637.Oter_2416"/>
<dbReference type="KEGG" id="ote:Oter_2416"/>
<dbReference type="eggNOG" id="COG0184">
    <property type="taxonomic scope" value="Bacteria"/>
</dbReference>
<dbReference type="HOGENOM" id="CLU_148518_0_0_0"/>
<dbReference type="OrthoDB" id="9799262at2"/>
<dbReference type="Proteomes" id="UP000007013">
    <property type="component" value="Chromosome"/>
</dbReference>
<dbReference type="GO" id="GO:0022627">
    <property type="term" value="C:cytosolic small ribosomal subunit"/>
    <property type="evidence" value="ECO:0007669"/>
    <property type="project" value="TreeGrafter"/>
</dbReference>
<dbReference type="GO" id="GO:0019843">
    <property type="term" value="F:rRNA binding"/>
    <property type="evidence" value="ECO:0007669"/>
    <property type="project" value="UniProtKB-UniRule"/>
</dbReference>
<dbReference type="GO" id="GO:0003735">
    <property type="term" value="F:structural constituent of ribosome"/>
    <property type="evidence" value="ECO:0007669"/>
    <property type="project" value="InterPro"/>
</dbReference>
<dbReference type="GO" id="GO:0006412">
    <property type="term" value="P:translation"/>
    <property type="evidence" value="ECO:0007669"/>
    <property type="project" value="UniProtKB-UniRule"/>
</dbReference>
<dbReference type="CDD" id="cd00353">
    <property type="entry name" value="Ribosomal_S15p_S13e"/>
    <property type="match status" value="1"/>
</dbReference>
<dbReference type="FunFam" id="1.10.287.10:FF:000002">
    <property type="entry name" value="30S ribosomal protein S15"/>
    <property type="match status" value="1"/>
</dbReference>
<dbReference type="Gene3D" id="6.10.250.3130">
    <property type="match status" value="1"/>
</dbReference>
<dbReference type="Gene3D" id="1.10.287.10">
    <property type="entry name" value="S15/NS1, RNA-binding"/>
    <property type="match status" value="1"/>
</dbReference>
<dbReference type="HAMAP" id="MF_01343_B">
    <property type="entry name" value="Ribosomal_uS15_B"/>
    <property type="match status" value="1"/>
</dbReference>
<dbReference type="InterPro" id="IPR000589">
    <property type="entry name" value="Ribosomal_uS15"/>
</dbReference>
<dbReference type="InterPro" id="IPR005290">
    <property type="entry name" value="Ribosomal_uS15_bac-type"/>
</dbReference>
<dbReference type="InterPro" id="IPR009068">
    <property type="entry name" value="uS15_NS1_RNA-bd_sf"/>
</dbReference>
<dbReference type="NCBIfam" id="TIGR00952">
    <property type="entry name" value="S15_bact"/>
    <property type="match status" value="1"/>
</dbReference>
<dbReference type="PANTHER" id="PTHR23321">
    <property type="entry name" value="RIBOSOMAL PROTEIN S15, BACTERIAL AND ORGANELLAR"/>
    <property type="match status" value="1"/>
</dbReference>
<dbReference type="PANTHER" id="PTHR23321:SF26">
    <property type="entry name" value="SMALL RIBOSOMAL SUBUNIT PROTEIN US15M"/>
    <property type="match status" value="1"/>
</dbReference>
<dbReference type="Pfam" id="PF00312">
    <property type="entry name" value="Ribosomal_S15"/>
    <property type="match status" value="1"/>
</dbReference>
<dbReference type="SMART" id="SM01387">
    <property type="entry name" value="Ribosomal_S15"/>
    <property type="match status" value="1"/>
</dbReference>
<dbReference type="SUPFAM" id="SSF47060">
    <property type="entry name" value="S15/NS1 RNA-binding domain"/>
    <property type="match status" value="1"/>
</dbReference>
<dbReference type="PROSITE" id="PS00362">
    <property type="entry name" value="RIBOSOMAL_S15"/>
    <property type="match status" value="1"/>
</dbReference>
<name>RS15_OPITP</name>
<reference key="1">
    <citation type="journal article" date="2011" name="J. Bacteriol.">
        <title>Genome sequence of the verrucomicrobium Opitutus terrae PB90-1, an abundant inhabitant of rice paddy soil ecosystems.</title>
        <authorList>
            <person name="van Passel M.W."/>
            <person name="Kant R."/>
            <person name="Palva A."/>
            <person name="Copeland A."/>
            <person name="Lucas S."/>
            <person name="Lapidus A."/>
            <person name="Glavina del Rio T."/>
            <person name="Pitluck S."/>
            <person name="Goltsman E."/>
            <person name="Clum A."/>
            <person name="Sun H."/>
            <person name="Schmutz J."/>
            <person name="Larimer F.W."/>
            <person name="Land M.L."/>
            <person name="Hauser L."/>
            <person name="Kyrpides N."/>
            <person name="Mikhailova N."/>
            <person name="Richardson P.P."/>
            <person name="Janssen P.H."/>
            <person name="de Vos W.M."/>
            <person name="Smidt H."/>
        </authorList>
    </citation>
    <scope>NUCLEOTIDE SEQUENCE [LARGE SCALE GENOMIC DNA]</scope>
    <source>
        <strain>DSM 11246 / JCM 15787 / PB90-1</strain>
    </source>
</reference>
<organism>
    <name type="scientific">Opitutus terrae (strain DSM 11246 / JCM 15787 / PB90-1)</name>
    <dbReference type="NCBI Taxonomy" id="452637"/>
    <lineage>
        <taxon>Bacteria</taxon>
        <taxon>Pseudomonadati</taxon>
        <taxon>Verrucomicrobiota</taxon>
        <taxon>Opitutia</taxon>
        <taxon>Opitutales</taxon>
        <taxon>Opitutaceae</taxon>
        <taxon>Opitutus</taxon>
    </lineage>
</organism>
<gene>
    <name evidence="1" type="primary">rpsO</name>
    <name type="ordered locus">Oter_2416</name>
</gene>
<proteinExistence type="inferred from homology"/>
<feature type="chain" id="PRO_0000354209" description="Small ribosomal subunit protein uS15">
    <location>
        <begin position="1"/>
        <end position="88"/>
    </location>
</feature>
<protein>
    <recommendedName>
        <fullName evidence="1">Small ribosomal subunit protein uS15</fullName>
    </recommendedName>
    <alternativeName>
        <fullName evidence="2">30S ribosomal protein S15</fullName>
    </alternativeName>
</protein>